<gene>
    <name evidence="1" type="primary">ackA1</name>
    <name type="synonym">ack1</name>
    <name type="synonym">ackA</name>
    <name type="ordered locus">LCA_0198</name>
</gene>
<evidence type="ECO:0000255" key="1">
    <source>
        <dbReference type="HAMAP-Rule" id="MF_00020"/>
    </source>
</evidence>
<keyword id="KW-0067">ATP-binding</keyword>
<keyword id="KW-0963">Cytoplasm</keyword>
<keyword id="KW-0418">Kinase</keyword>
<keyword id="KW-0460">Magnesium</keyword>
<keyword id="KW-0479">Metal-binding</keyword>
<keyword id="KW-0547">Nucleotide-binding</keyword>
<keyword id="KW-1185">Reference proteome</keyword>
<keyword id="KW-0808">Transferase</keyword>
<accession>Q9X4M1</accession>
<accession>Q38Z82</accession>
<proteinExistence type="inferred from homology"/>
<comment type="function">
    <text evidence="1">Catalyzes the formation of acetyl phosphate from acetate and ATP. Can also catalyze the reverse reaction.</text>
</comment>
<comment type="catalytic activity">
    <reaction evidence="1">
        <text>acetate + ATP = acetyl phosphate + ADP</text>
        <dbReference type="Rhea" id="RHEA:11352"/>
        <dbReference type="ChEBI" id="CHEBI:22191"/>
        <dbReference type="ChEBI" id="CHEBI:30089"/>
        <dbReference type="ChEBI" id="CHEBI:30616"/>
        <dbReference type="ChEBI" id="CHEBI:456216"/>
        <dbReference type="EC" id="2.7.2.1"/>
    </reaction>
</comment>
<comment type="cofactor">
    <cofactor evidence="1">
        <name>Mg(2+)</name>
        <dbReference type="ChEBI" id="CHEBI:18420"/>
    </cofactor>
    <cofactor evidence="1">
        <name>Mn(2+)</name>
        <dbReference type="ChEBI" id="CHEBI:29035"/>
    </cofactor>
    <text evidence="1">Mg(2+). Can also accept Mn(2+).</text>
</comment>
<comment type="pathway">
    <text evidence="1">Metabolic intermediate biosynthesis; acetyl-CoA biosynthesis; acetyl-CoA from acetate: step 1/2.</text>
</comment>
<comment type="subunit">
    <text evidence="1">Homodimer.</text>
</comment>
<comment type="subcellular location">
    <subcellularLocation>
        <location evidence="1">Cytoplasm</location>
    </subcellularLocation>
</comment>
<comment type="similarity">
    <text evidence="1">Belongs to the acetokinase family.</text>
</comment>
<dbReference type="EC" id="2.7.2.1" evidence="1"/>
<dbReference type="EMBL" id="AF115391">
    <property type="protein sequence ID" value="AAD34334.1"/>
    <property type="molecule type" value="Genomic_DNA"/>
</dbReference>
<dbReference type="EMBL" id="CR936503">
    <property type="protein sequence ID" value="CAI54495.1"/>
    <property type="molecule type" value="Genomic_DNA"/>
</dbReference>
<dbReference type="RefSeq" id="WP_011373908.1">
    <property type="nucleotide sequence ID" value="NC_007576.1"/>
</dbReference>
<dbReference type="SMR" id="Q9X4M1"/>
<dbReference type="STRING" id="314315.LCA_0198"/>
<dbReference type="GeneID" id="57133008"/>
<dbReference type="KEGG" id="lsa:LCA_0198"/>
<dbReference type="eggNOG" id="COG0282">
    <property type="taxonomic scope" value="Bacteria"/>
</dbReference>
<dbReference type="HOGENOM" id="CLU_020352_0_1_9"/>
<dbReference type="OrthoDB" id="9802453at2"/>
<dbReference type="UniPathway" id="UPA00340">
    <property type="reaction ID" value="UER00458"/>
</dbReference>
<dbReference type="Proteomes" id="UP000002707">
    <property type="component" value="Chromosome"/>
</dbReference>
<dbReference type="GO" id="GO:0005737">
    <property type="term" value="C:cytoplasm"/>
    <property type="evidence" value="ECO:0007669"/>
    <property type="project" value="UniProtKB-SubCell"/>
</dbReference>
<dbReference type="GO" id="GO:0008776">
    <property type="term" value="F:acetate kinase activity"/>
    <property type="evidence" value="ECO:0007669"/>
    <property type="project" value="UniProtKB-UniRule"/>
</dbReference>
<dbReference type="GO" id="GO:0005524">
    <property type="term" value="F:ATP binding"/>
    <property type="evidence" value="ECO:0007669"/>
    <property type="project" value="UniProtKB-KW"/>
</dbReference>
<dbReference type="GO" id="GO:0000287">
    <property type="term" value="F:magnesium ion binding"/>
    <property type="evidence" value="ECO:0007669"/>
    <property type="project" value="UniProtKB-UniRule"/>
</dbReference>
<dbReference type="GO" id="GO:0006083">
    <property type="term" value="P:acetate metabolic process"/>
    <property type="evidence" value="ECO:0007669"/>
    <property type="project" value="TreeGrafter"/>
</dbReference>
<dbReference type="GO" id="GO:0006085">
    <property type="term" value="P:acetyl-CoA biosynthetic process"/>
    <property type="evidence" value="ECO:0007669"/>
    <property type="project" value="UniProtKB-UniRule"/>
</dbReference>
<dbReference type="CDD" id="cd24010">
    <property type="entry name" value="ASKHA_NBD_AcK_PK"/>
    <property type="match status" value="1"/>
</dbReference>
<dbReference type="Gene3D" id="3.30.420.40">
    <property type="match status" value="2"/>
</dbReference>
<dbReference type="HAMAP" id="MF_00020">
    <property type="entry name" value="Acetate_kinase"/>
    <property type="match status" value="1"/>
</dbReference>
<dbReference type="InterPro" id="IPR004372">
    <property type="entry name" value="Ac/propionate_kinase"/>
</dbReference>
<dbReference type="InterPro" id="IPR000890">
    <property type="entry name" value="Aliphatic_acid_kin_short-chain"/>
</dbReference>
<dbReference type="InterPro" id="IPR023865">
    <property type="entry name" value="Aliphatic_acid_kinase_CS"/>
</dbReference>
<dbReference type="InterPro" id="IPR043129">
    <property type="entry name" value="ATPase_NBD"/>
</dbReference>
<dbReference type="NCBIfam" id="TIGR00016">
    <property type="entry name" value="ackA"/>
    <property type="match status" value="1"/>
</dbReference>
<dbReference type="PANTHER" id="PTHR21060">
    <property type="entry name" value="ACETATE KINASE"/>
    <property type="match status" value="1"/>
</dbReference>
<dbReference type="PANTHER" id="PTHR21060:SF15">
    <property type="entry name" value="ACETATE KINASE-RELATED"/>
    <property type="match status" value="1"/>
</dbReference>
<dbReference type="Pfam" id="PF00871">
    <property type="entry name" value="Acetate_kinase"/>
    <property type="match status" value="1"/>
</dbReference>
<dbReference type="PIRSF" id="PIRSF000722">
    <property type="entry name" value="Acetate_prop_kin"/>
    <property type="match status" value="1"/>
</dbReference>
<dbReference type="PRINTS" id="PR00471">
    <property type="entry name" value="ACETATEKNASE"/>
</dbReference>
<dbReference type="SUPFAM" id="SSF53067">
    <property type="entry name" value="Actin-like ATPase domain"/>
    <property type="match status" value="2"/>
</dbReference>
<dbReference type="PROSITE" id="PS01075">
    <property type="entry name" value="ACETATE_KINASE_1"/>
    <property type="match status" value="1"/>
</dbReference>
<dbReference type="PROSITE" id="PS01076">
    <property type="entry name" value="ACETATE_KINASE_2"/>
    <property type="match status" value="1"/>
</dbReference>
<sequence>MEKILAINAGSSTLKWQLFEMPSETVIAKGMIDRLGLSDSVFTAKYGDNQKFKEVQDVTTHEMAATLLLTRLKELGIVSHLDEITGVGHRVVGGGEAFSDSMVINPVALDEINRLAEYAPLHNPTQAYYIKIFTALLPGVPQVAVFDTSFYSTLAPENYLYSIPQEYYQTFGARKYGAHGTSHRYVAHRAAEILGTPLESQKMITLHLGSGASITAVQDGHAVDTSMGFTPLAGITMGTRSGDIDVSLVAFLAKKLEITMPEMIDILNHKSGLLGISELSPDMRDLEETAATRPQSALALSIFVNRVVKYVGSYVALMNGIDTLVFTAGSGENGSELRADICKQLACFGVKLDEEKNNVRSQERIISADDSKVKVLIVPTNEELMIARDVMRLK</sequence>
<protein>
    <recommendedName>
        <fullName evidence="1">Acetate kinase 1</fullName>
        <ecNumber evidence="1">2.7.2.1</ecNumber>
    </recommendedName>
    <alternativeName>
        <fullName evidence="1">Acetokinase 1</fullName>
    </alternativeName>
</protein>
<name>ACKA1_LATSS</name>
<feature type="chain" id="PRO_0000107572" description="Acetate kinase 1">
    <location>
        <begin position="1"/>
        <end position="394"/>
    </location>
</feature>
<feature type="active site" description="Proton donor/acceptor" evidence="1">
    <location>
        <position position="147"/>
    </location>
</feature>
<feature type="binding site" evidence="1">
    <location>
        <position position="8"/>
    </location>
    <ligand>
        <name>Mg(2+)</name>
        <dbReference type="ChEBI" id="CHEBI:18420"/>
    </ligand>
</feature>
<feature type="binding site" evidence="1">
    <location>
        <position position="15"/>
    </location>
    <ligand>
        <name>ATP</name>
        <dbReference type="ChEBI" id="CHEBI:30616"/>
    </ligand>
</feature>
<feature type="binding site" evidence="1">
    <location>
        <position position="90"/>
    </location>
    <ligand>
        <name>substrate</name>
    </ligand>
</feature>
<feature type="binding site" evidence="1">
    <location>
        <begin position="207"/>
        <end position="211"/>
    </location>
    <ligand>
        <name>ATP</name>
        <dbReference type="ChEBI" id="CHEBI:30616"/>
    </ligand>
</feature>
<feature type="binding site" evidence="1">
    <location>
        <begin position="282"/>
        <end position="284"/>
    </location>
    <ligand>
        <name>ATP</name>
        <dbReference type="ChEBI" id="CHEBI:30616"/>
    </ligand>
</feature>
<feature type="binding site" evidence="1">
    <location>
        <position position="382"/>
    </location>
    <ligand>
        <name>Mg(2+)</name>
        <dbReference type="ChEBI" id="CHEBI:18420"/>
    </ligand>
</feature>
<feature type="site" description="Transition state stabilizer" evidence="1">
    <location>
        <position position="179"/>
    </location>
</feature>
<feature type="site" description="Transition state stabilizer" evidence="1">
    <location>
        <position position="240"/>
    </location>
</feature>
<reference key="1">
    <citation type="journal article" date="1999" name="J. Mol. Microbiol. Biotechnol.">
        <title>Ribose utilization in Lactobacillus sakei: analysis of the regulation of the rbs operon and putative involvement of a new transporter.</title>
        <authorList>
            <person name="Stentz R."/>
            <person name="Zagorec M."/>
        </authorList>
    </citation>
    <scope>NUCLEOTIDE SEQUENCE [GENOMIC DNA]</scope>
</reference>
<reference key="2">
    <citation type="journal article" date="2005" name="Nat. Biotechnol.">
        <title>The complete genome sequence of the meat-borne lactic acid bacterium Lactobacillus sakei 23K.</title>
        <authorList>
            <person name="Chaillou S."/>
            <person name="Champomier-Verges M.-C."/>
            <person name="Cornet M."/>
            <person name="Crutz-Le Coq A.-M."/>
            <person name="Dudez A.-M."/>
            <person name="Martin V."/>
            <person name="Beaufils S."/>
            <person name="Darbon-Rongere E."/>
            <person name="Bossy R."/>
            <person name="Loux V."/>
            <person name="Zagorec M."/>
        </authorList>
    </citation>
    <scope>NUCLEOTIDE SEQUENCE [LARGE SCALE GENOMIC DNA]</scope>
    <source>
        <strain>23K</strain>
    </source>
</reference>
<organism>
    <name type="scientific">Latilactobacillus sakei subsp. sakei (strain 23K)</name>
    <name type="common">Lactobacillus sakei subsp. sakei</name>
    <dbReference type="NCBI Taxonomy" id="314315"/>
    <lineage>
        <taxon>Bacteria</taxon>
        <taxon>Bacillati</taxon>
        <taxon>Bacillota</taxon>
        <taxon>Bacilli</taxon>
        <taxon>Lactobacillales</taxon>
        <taxon>Lactobacillaceae</taxon>
        <taxon>Latilactobacillus</taxon>
    </lineage>
</organism>